<accession>Q74HV9</accession>
<reference key="1">
    <citation type="journal article" date="2004" name="Proc. Natl. Acad. Sci. U.S.A.">
        <title>The genome sequence of the probiotic intestinal bacterium Lactobacillus johnsonii NCC 533.</title>
        <authorList>
            <person name="Pridmore R.D."/>
            <person name="Berger B."/>
            <person name="Desiere F."/>
            <person name="Vilanova D."/>
            <person name="Barretto C."/>
            <person name="Pittet A.-C."/>
            <person name="Zwahlen M.-C."/>
            <person name="Rouvet M."/>
            <person name="Altermann E."/>
            <person name="Barrangou R."/>
            <person name="Mollet B."/>
            <person name="Mercenier A."/>
            <person name="Klaenhammer T."/>
            <person name="Arigoni F."/>
            <person name="Schell M.A."/>
        </authorList>
    </citation>
    <scope>NUCLEOTIDE SEQUENCE [LARGE SCALE GENOMIC DNA]</scope>
    <source>
        <strain>CNCM I-1225 / La1 / NCC 533</strain>
    </source>
</reference>
<comment type="function">
    <text evidence="1">Channel that opens in response to stretch forces in the membrane lipid bilayer. May participate in the regulation of osmotic pressure changes within the cell.</text>
</comment>
<comment type="subunit">
    <text evidence="1">Homopentamer.</text>
</comment>
<comment type="subcellular location">
    <subcellularLocation>
        <location evidence="1">Cell membrane</location>
        <topology evidence="1">Multi-pass membrane protein</topology>
    </subcellularLocation>
</comment>
<comment type="similarity">
    <text evidence="1">Belongs to the MscL family.</text>
</comment>
<feature type="chain" id="PRO_0000238007" description="Large-conductance mechanosensitive channel">
    <location>
        <begin position="1"/>
        <end position="124"/>
    </location>
</feature>
<feature type="transmembrane region" description="Helical" evidence="1">
    <location>
        <begin position="15"/>
        <end position="35"/>
    </location>
</feature>
<feature type="transmembrane region" description="Helical" evidence="1">
    <location>
        <begin position="67"/>
        <end position="87"/>
    </location>
</feature>
<gene>
    <name evidence="1" type="primary">mscL</name>
    <name type="ordered locus">LJ_0640</name>
</gene>
<name>MSCL_LACJO</name>
<sequence>MVKEFKEFISRGNMMDLAVGVIIGAAFTAIVNSLVKDLINPLIGLFIGKIDLSNLKFTIGEATFKYGSFLNAVINFLIIALVVFFLIKLVNKITPKKEVEEDPAPTNEEIYLRQIRDLLQEKNK</sequence>
<proteinExistence type="inferred from homology"/>
<keyword id="KW-1003">Cell membrane</keyword>
<keyword id="KW-0407">Ion channel</keyword>
<keyword id="KW-0406">Ion transport</keyword>
<keyword id="KW-0472">Membrane</keyword>
<keyword id="KW-0812">Transmembrane</keyword>
<keyword id="KW-1133">Transmembrane helix</keyword>
<keyword id="KW-0813">Transport</keyword>
<organism>
    <name type="scientific">Lactobacillus johnsonii (strain CNCM I-12250 / La1 / NCC 533)</name>
    <dbReference type="NCBI Taxonomy" id="257314"/>
    <lineage>
        <taxon>Bacteria</taxon>
        <taxon>Bacillati</taxon>
        <taxon>Bacillota</taxon>
        <taxon>Bacilli</taxon>
        <taxon>Lactobacillales</taxon>
        <taxon>Lactobacillaceae</taxon>
        <taxon>Lactobacillus</taxon>
    </lineage>
</organism>
<protein>
    <recommendedName>
        <fullName evidence="1">Large-conductance mechanosensitive channel</fullName>
    </recommendedName>
</protein>
<dbReference type="EMBL" id="AE017198">
    <property type="protein sequence ID" value="AAS09581.1"/>
    <property type="molecule type" value="Genomic_DNA"/>
</dbReference>
<dbReference type="RefSeq" id="WP_004897950.1">
    <property type="nucleotide sequence ID" value="NC_005362.1"/>
</dbReference>
<dbReference type="GeneID" id="83571049"/>
<dbReference type="KEGG" id="ljo:LJ_0640"/>
<dbReference type="eggNOG" id="COG1970">
    <property type="taxonomic scope" value="Bacteria"/>
</dbReference>
<dbReference type="HOGENOM" id="CLU_095787_0_0_9"/>
<dbReference type="Proteomes" id="UP000000581">
    <property type="component" value="Chromosome"/>
</dbReference>
<dbReference type="GO" id="GO:0005886">
    <property type="term" value="C:plasma membrane"/>
    <property type="evidence" value="ECO:0007669"/>
    <property type="project" value="UniProtKB-SubCell"/>
</dbReference>
<dbReference type="GO" id="GO:0008381">
    <property type="term" value="F:mechanosensitive monoatomic ion channel activity"/>
    <property type="evidence" value="ECO:0007669"/>
    <property type="project" value="UniProtKB-UniRule"/>
</dbReference>
<dbReference type="Gene3D" id="1.10.1200.120">
    <property type="entry name" value="Large-conductance mechanosensitive channel, MscL, domain 1"/>
    <property type="match status" value="1"/>
</dbReference>
<dbReference type="HAMAP" id="MF_00115">
    <property type="entry name" value="MscL"/>
    <property type="match status" value="1"/>
</dbReference>
<dbReference type="InterPro" id="IPR019823">
    <property type="entry name" value="Mechanosensitive_channel_CS"/>
</dbReference>
<dbReference type="InterPro" id="IPR001185">
    <property type="entry name" value="MS_channel"/>
</dbReference>
<dbReference type="InterPro" id="IPR037673">
    <property type="entry name" value="MSC/AndL"/>
</dbReference>
<dbReference type="InterPro" id="IPR036019">
    <property type="entry name" value="MscL_channel"/>
</dbReference>
<dbReference type="NCBIfam" id="TIGR00220">
    <property type="entry name" value="mscL"/>
    <property type="match status" value="1"/>
</dbReference>
<dbReference type="NCBIfam" id="NF001842">
    <property type="entry name" value="PRK00567.1-3"/>
    <property type="match status" value="1"/>
</dbReference>
<dbReference type="PANTHER" id="PTHR30266:SF2">
    <property type="entry name" value="LARGE-CONDUCTANCE MECHANOSENSITIVE CHANNEL"/>
    <property type="match status" value="1"/>
</dbReference>
<dbReference type="PANTHER" id="PTHR30266">
    <property type="entry name" value="MECHANOSENSITIVE CHANNEL MSCL"/>
    <property type="match status" value="1"/>
</dbReference>
<dbReference type="Pfam" id="PF01741">
    <property type="entry name" value="MscL"/>
    <property type="match status" value="1"/>
</dbReference>
<dbReference type="PRINTS" id="PR01264">
    <property type="entry name" value="MECHCHANNEL"/>
</dbReference>
<dbReference type="SUPFAM" id="SSF81330">
    <property type="entry name" value="Gated mechanosensitive channel"/>
    <property type="match status" value="1"/>
</dbReference>
<dbReference type="PROSITE" id="PS01327">
    <property type="entry name" value="MSCL"/>
    <property type="match status" value="1"/>
</dbReference>
<evidence type="ECO:0000255" key="1">
    <source>
        <dbReference type="HAMAP-Rule" id="MF_00115"/>
    </source>
</evidence>